<comment type="function">
    <text evidence="1">Involved in phosphonate degradation.</text>
</comment>
<comment type="catalytic activity">
    <reaction evidence="1">
        <text>phosphonoacetaldehyde + H2O = acetaldehyde + phosphate + H(+)</text>
        <dbReference type="Rhea" id="RHEA:18905"/>
        <dbReference type="ChEBI" id="CHEBI:15343"/>
        <dbReference type="ChEBI" id="CHEBI:15377"/>
        <dbReference type="ChEBI" id="CHEBI:15378"/>
        <dbReference type="ChEBI" id="CHEBI:43474"/>
        <dbReference type="ChEBI" id="CHEBI:58383"/>
        <dbReference type="EC" id="3.11.1.1"/>
    </reaction>
</comment>
<comment type="cofactor">
    <cofactor evidence="1">
        <name>Mg(2+)</name>
        <dbReference type="ChEBI" id="CHEBI:18420"/>
    </cofactor>
    <text evidence="1">Binds 1 Mg(2+) ion per subunit.</text>
</comment>
<comment type="subunit">
    <text evidence="1">Homodimer.</text>
</comment>
<comment type="similarity">
    <text evidence="1">Belongs to the HAD-like hydrolase superfamily. PhnX family.</text>
</comment>
<proteinExistence type="inferred from homology"/>
<dbReference type="EC" id="3.11.1.1" evidence="1"/>
<dbReference type="EMBL" id="AE003853">
    <property type="protein sequence ID" value="AAF96507.1"/>
    <property type="molecule type" value="Genomic_DNA"/>
</dbReference>
<dbReference type="PIR" id="B82438">
    <property type="entry name" value="B82438"/>
</dbReference>
<dbReference type="RefSeq" id="NP_232995.1">
    <property type="nucleotide sequence ID" value="NC_002506.1"/>
</dbReference>
<dbReference type="RefSeq" id="WP_001889086.1">
    <property type="nucleotide sequence ID" value="NZ_LT906615.1"/>
</dbReference>
<dbReference type="SMR" id="Q9KLY5"/>
<dbReference type="STRING" id="243277.VC_A0606"/>
<dbReference type="DNASU" id="2612240"/>
<dbReference type="EnsemblBacteria" id="AAF96507">
    <property type="protein sequence ID" value="AAF96507"/>
    <property type="gene ID" value="VC_A0606"/>
</dbReference>
<dbReference type="KEGG" id="vch:VC_A0606"/>
<dbReference type="PATRIC" id="fig|243277.26.peg.3233"/>
<dbReference type="eggNOG" id="COG0637">
    <property type="taxonomic scope" value="Bacteria"/>
</dbReference>
<dbReference type="HOGENOM" id="CLU_045011_12_0_6"/>
<dbReference type="Proteomes" id="UP000000584">
    <property type="component" value="Chromosome 2"/>
</dbReference>
<dbReference type="GO" id="GO:0005829">
    <property type="term" value="C:cytosol"/>
    <property type="evidence" value="ECO:0000318"/>
    <property type="project" value="GO_Central"/>
</dbReference>
<dbReference type="GO" id="GO:0000287">
    <property type="term" value="F:magnesium ion binding"/>
    <property type="evidence" value="ECO:0007669"/>
    <property type="project" value="UniProtKB-UniRule"/>
</dbReference>
<dbReference type="GO" id="GO:0008967">
    <property type="term" value="F:phosphoglycolate phosphatase activity"/>
    <property type="evidence" value="ECO:0000318"/>
    <property type="project" value="GO_Central"/>
</dbReference>
<dbReference type="GO" id="GO:0050194">
    <property type="term" value="F:phosphonoacetaldehyde hydrolase activity"/>
    <property type="evidence" value="ECO:0007669"/>
    <property type="project" value="UniProtKB-UniRule"/>
</dbReference>
<dbReference type="GO" id="GO:0006281">
    <property type="term" value="P:DNA repair"/>
    <property type="evidence" value="ECO:0000318"/>
    <property type="project" value="GO_Central"/>
</dbReference>
<dbReference type="GO" id="GO:0019700">
    <property type="term" value="P:organic phosphonate catabolic process"/>
    <property type="evidence" value="ECO:0007669"/>
    <property type="project" value="InterPro"/>
</dbReference>
<dbReference type="CDD" id="cd02586">
    <property type="entry name" value="HAD_PHN"/>
    <property type="match status" value="1"/>
</dbReference>
<dbReference type="FunFam" id="1.10.150.240:FF:000006">
    <property type="entry name" value="Phosphonoacetaldehyde hydrolase"/>
    <property type="match status" value="1"/>
</dbReference>
<dbReference type="Gene3D" id="3.40.50.1000">
    <property type="entry name" value="HAD superfamily/HAD-like"/>
    <property type="match status" value="1"/>
</dbReference>
<dbReference type="Gene3D" id="1.10.150.240">
    <property type="entry name" value="Putative phosphatase, domain 2"/>
    <property type="match status" value="1"/>
</dbReference>
<dbReference type="HAMAP" id="MF_01375">
    <property type="entry name" value="PhnX"/>
    <property type="match status" value="1"/>
</dbReference>
<dbReference type="InterPro" id="IPR050155">
    <property type="entry name" value="HAD-like_hydrolase_sf"/>
</dbReference>
<dbReference type="InterPro" id="IPR036412">
    <property type="entry name" value="HAD-like_sf"/>
</dbReference>
<dbReference type="InterPro" id="IPR006439">
    <property type="entry name" value="HAD-SF_hydro_IA"/>
</dbReference>
<dbReference type="InterPro" id="IPR023214">
    <property type="entry name" value="HAD_sf"/>
</dbReference>
<dbReference type="InterPro" id="IPR023198">
    <property type="entry name" value="PGP-like_dom2"/>
</dbReference>
<dbReference type="InterPro" id="IPR006323">
    <property type="entry name" value="Phosphonoacetald_hydro"/>
</dbReference>
<dbReference type="NCBIfam" id="TIGR01509">
    <property type="entry name" value="HAD-SF-IA-v3"/>
    <property type="match status" value="1"/>
</dbReference>
<dbReference type="NCBIfam" id="TIGR01422">
    <property type="entry name" value="phosphonatase"/>
    <property type="match status" value="1"/>
</dbReference>
<dbReference type="PANTHER" id="PTHR43434">
    <property type="entry name" value="PHOSPHOGLYCOLATE PHOSPHATASE"/>
    <property type="match status" value="1"/>
</dbReference>
<dbReference type="PANTHER" id="PTHR43434:SF19">
    <property type="entry name" value="PHOSPHONOACETALDEHYDE HYDROLASE"/>
    <property type="match status" value="1"/>
</dbReference>
<dbReference type="Pfam" id="PF00702">
    <property type="entry name" value="Hydrolase"/>
    <property type="match status" value="1"/>
</dbReference>
<dbReference type="SFLD" id="SFLDS00003">
    <property type="entry name" value="Haloacid_Dehalogenase"/>
    <property type="match status" value="1"/>
</dbReference>
<dbReference type="SFLD" id="SFLDF00038">
    <property type="entry name" value="phosphonoacetaldehyde_hydrolas"/>
    <property type="match status" value="1"/>
</dbReference>
<dbReference type="SUPFAM" id="SSF56784">
    <property type="entry name" value="HAD-like"/>
    <property type="match status" value="1"/>
</dbReference>
<accession>Q9KLY5</accession>
<gene>
    <name evidence="1" type="primary">phnX</name>
    <name type="ordered locus">VC_A0606</name>
</gene>
<sequence length="271" mass="29539">MMNSPIQAVIFDWAGTIVDFGSFAPTSIFVEAFKQGFDFEISLAEAREPMGLGKWQHIEAVGKLPTVAQRWQKQFGRPMQASDIDAIYAAFMPLQIAKVADHAAPIPHSLEVVEQIRSRGIKIGSCSGYPRQVMDVLIAAAADYGYRPDYVVATDDLAQGGRPAPFMALKNVIELGVTDVRACVKVDDALPGIEEGHNAGMWTVGLLLSGNEAGLTLEEYQHADDQTLQAARERAQAKLQQAKPHYLIDTVADLPAVLAQIEQRLLAGERP</sequence>
<keyword id="KW-0378">Hydrolase</keyword>
<keyword id="KW-0460">Magnesium</keyword>
<keyword id="KW-0479">Metal-binding</keyword>
<keyword id="KW-1185">Reference proteome</keyword>
<keyword id="KW-0704">Schiff base</keyword>
<organism>
    <name type="scientific">Vibrio cholerae serotype O1 (strain ATCC 39315 / El Tor Inaba N16961)</name>
    <dbReference type="NCBI Taxonomy" id="243277"/>
    <lineage>
        <taxon>Bacteria</taxon>
        <taxon>Pseudomonadati</taxon>
        <taxon>Pseudomonadota</taxon>
        <taxon>Gammaproteobacteria</taxon>
        <taxon>Vibrionales</taxon>
        <taxon>Vibrionaceae</taxon>
        <taxon>Vibrio</taxon>
    </lineage>
</organism>
<evidence type="ECO:0000255" key="1">
    <source>
        <dbReference type="HAMAP-Rule" id="MF_01375"/>
    </source>
</evidence>
<reference key="1">
    <citation type="journal article" date="2000" name="Nature">
        <title>DNA sequence of both chromosomes of the cholera pathogen Vibrio cholerae.</title>
        <authorList>
            <person name="Heidelberg J.F."/>
            <person name="Eisen J.A."/>
            <person name="Nelson W.C."/>
            <person name="Clayton R.A."/>
            <person name="Gwinn M.L."/>
            <person name="Dodson R.J."/>
            <person name="Haft D.H."/>
            <person name="Hickey E.K."/>
            <person name="Peterson J.D."/>
            <person name="Umayam L.A."/>
            <person name="Gill S.R."/>
            <person name="Nelson K.E."/>
            <person name="Read T.D."/>
            <person name="Tettelin H."/>
            <person name="Richardson D.L."/>
            <person name="Ermolaeva M.D."/>
            <person name="Vamathevan J.J."/>
            <person name="Bass S."/>
            <person name="Qin H."/>
            <person name="Dragoi I."/>
            <person name="Sellers P."/>
            <person name="McDonald L.A."/>
            <person name="Utterback T.R."/>
            <person name="Fleischmann R.D."/>
            <person name="Nierman W.C."/>
            <person name="White O."/>
            <person name="Salzberg S.L."/>
            <person name="Smith H.O."/>
            <person name="Colwell R.R."/>
            <person name="Mekalanos J.J."/>
            <person name="Venter J.C."/>
            <person name="Fraser C.M."/>
        </authorList>
    </citation>
    <scope>NUCLEOTIDE SEQUENCE [LARGE SCALE GENOMIC DNA]</scope>
    <source>
        <strain>ATCC 39315 / El Tor Inaba N16961</strain>
    </source>
</reference>
<protein>
    <recommendedName>
        <fullName evidence="1">Phosphonoacetaldehyde hydrolase</fullName>
        <shortName evidence="1">Phosphonatase</shortName>
        <ecNumber evidence="1">3.11.1.1</ecNumber>
    </recommendedName>
    <alternativeName>
        <fullName evidence="1">Phosphonoacetaldehyde phosphonohydrolase</fullName>
    </alternativeName>
</protein>
<feature type="chain" id="PRO_0000284603" description="Phosphonoacetaldehyde hydrolase">
    <location>
        <begin position="1"/>
        <end position="271"/>
    </location>
</feature>
<feature type="active site" description="Nucleophile" evidence="1">
    <location>
        <position position="12"/>
    </location>
</feature>
<feature type="active site" description="Schiff-base intermediate with substrate" evidence="1">
    <location>
        <position position="54"/>
    </location>
</feature>
<feature type="binding site" evidence="1">
    <location>
        <position position="12"/>
    </location>
    <ligand>
        <name>Mg(2+)</name>
        <dbReference type="ChEBI" id="CHEBI:18420"/>
    </ligand>
</feature>
<feature type="binding site" evidence="1">
    <location>
        <position position="14"/>
    </location>
    <ligand>
        <name>Mg(2+)</name>
        <dbReference type="ChEBI" id="CHEBI:18420"/>
    </ligand>
</feature>
<feature type="binding site" evidence="1">
    <location>
        <position position="188"/>
    </location>
    <ligand>
        <name>Mg(2+)</name>
        <dbReference type="ChEBI" id="CHEBI:18420"/>
    </ligand>
</feature>
<name>PHNX_VIBCH</name>